<proteinExistence type="evidence at protein level"/>
<feature type="chain" id="PRO_0000058001" description="Protein numb homolog">
    <location>
        <begin position="1"/>
        <end position="651"/>
    </location>
</feature>
<feature type="domain" description="PID" evidence="4">
    <location>
        <begin position="33"/>
        <end position="193"/>
    </location>
</feature>
<feature type="region of interest" description="Disordered" evidence="5">
    <location>
        <begin position="228"/>
        <end position="255"/>
    </location>
</feature>
<feature type="region of interest" description="Disordered" evidence="5">
    <location>
        <begin position="419"/>
        <end position="483"/>
    </location>
</feature>
<feature type="region of interest" description="Disordered" evidence="5">
    <location>
        <begin position="623"/>
        <end position="651"/>
    </location>
</feature>
<feature type="compositionally biased region" description="Low complexity" evidence="5">
    <location>
        <begin position="235"/>
        <end position="252"/>
    </location>
</feature>
<feature type="compositionally biased region" description="Basic and acidic residues" evidence="5">
    <location>
        <begin position="436"/>
        <end position="449"/>
    </location>
</feature>
<feature type="compositionally biased region" description="Low complexity" evidence="5">
    <location>
        <begin position="453"/>
        <end position="466"/>
    </location>
</feature>
<feature type="compositionally biased region" description="Polar residues" evidence="5">
    <location>
        <begin position="630"/>
        <end position="644"/>
    </location>
</feature>
<feature type="modified residue" description="Phosphothreonine; by AAK1" evidence="17">
    <location>
        <position position="102"/>
    </location>
</feature>
<feature type="modified residue" description="Phosphoserine" evidence="21">
    <location>
        <position position="194"/>
    </location>
</feature>
<feature type="modified residue" description="Phosphothreonine" evidence="3">
    <location>
        <position position="243"/>
    </location>
</feature>
<feature type="modified residue" description="Phosphoserine" evidence="20">
    <location>
        <position position="244"/>
    </location>
</feature>
<feature type="modified residue" description="Phosphoserine; by CaMK1" evidence="2">
    <location>
        <position position="276"/>
    </location>
</feature>
<feature type="modified residue" description="Phosphoserine; by CaMK1" evidence="2">
    <location>
        <position position="295"/>
    </location>
</feature>
<feature type="modified residue" description="Phosphoserine" evidence="21">
    <location>
        <position position="425"/>
    </location>
</feature>
<feature type="modified residue" description="Phosphothreonine" evidence="21">
    <location>
        <position position="436"/>
    </location>
</feature>
<feature type="modified residue" description="Phosphoserine" evidence="21 22">
    <location>
        <position position="438"/>
    </location>
</feature>
<feature type="modified residue" description="Phosphoserine" evidence="19 21">
    <location>
        <position position="634"/>
    </location>
</feature>
<feature type="splice variant" id="VSP_053745" description="In isoform 9." evidence="11 13">
    <location>
        <begin position="1"/>
        <end position="254"/>
    </location>
</feature>
<feature type="splice variant" id="VSP_004348" description="In isoform 3, isoform 4, isoform 6 and isoform 8." evidence="10 12 13">
    <location>
        <begin position="68"/>
        <end position="78"/>
    </location>
</feature>
<feature type="splice variant" id="VSP_047756" description="In isoform 5, isoform 6, isoform 7 and isoform 8." evidence="13">
    <location>
        <begin position="219"/>
        <end position="316"/>
    </location>
</feature>
<feature type="splice variant" id="VSP_053763" description="In isoform 7 and isoform 8." evidence="13">
    <location>
        <begin position="317"/>
        <end position="365"/>
    </location>
</feature>
<feature type="splice variant" id="VSP_004349" description="In isoform 2, isoform 4, isoform 5, isoform 6, isoform 7, isoform 8 and isoform 9." evidence="10 11 12 13 14 15">
    <location>
        <begin position="366"/>
        <end position="413"/>
    </location>
</feature>
<feature type="sequence variant" id="VAR_051249" description="In dbSNP:rs17182272.">
    <original>V</original>
    <variation>I</variation>
    <location>
        <position position="387"/>
    </location>
</feature>
<feature type="sequence variant" id="VAR_051250" description="In dbSNP:rs17781919.">
    <original>G</original>
    <variation>D</variation>
    <location>
        <position position="595"/>
    </location>
</feature>
<feature type="mutagenesis site" description="Loss of AAK1-mediated phosphorylation." evidence="9">
    <original>T</original>
    <variation>A</variation>
    <location>
        <position position="102"/>
    </location>
</feature>
<feature type="sequence conflict" description="In Ref. 4; AAD27959." evidence="16" ref="4">
    <original>G</original>
    <variation>S</variation>
    <location>
        <position position="31"/>
    </location>
</feature>
<feature type="sequence conflict" description="In Ref. 4; AAD27959." evidence="16" ref="4">
    <original>E</original>
    <variation>Q</variation>
    <location>
        <position position="68"/>
    </location>
</feature>
<feature type="sequence conflict" description="In Ref. 4; AAD27959." evidence="16" ref="4">
    <original>G</original>
    <variation>R</variation>
    <location>
        <position position="193"/>
    </location>
</feature>
<feature type="sequence conflict" description="In Ref. 4; AAD27959." evidence="16" ref="4">
    <original>S</original>
    <variation>N</variation>
    <location>
        <position position="450"/>
    </location>
</feature>
<feature type="sequence conflict" description="In Ref. 8; AAH68476." evidence="16" ref="8">
    <original>Q</original>
    <variation>K</variation>
    <location>
        <position position="533"/>
    </location>
</feature>
<feature type="helix" evidence="23">
    <location>
        <begin position="28"/>
        <end position="33"/>
    </location>
</feature>
<feature type="strand" evidence="23">
    <location>
        <begin position="38"/>
        <end position="48"/>
    </location>
</feature>
<feature type="strand" evidence="23">
    <location>
        <begin position="50"/>
        <end position="53"/>
    </location>
</feature>
<feature type="helix" evidence="23">
    <location>
        <begin position="55"/>
        <end position="71"/>
    </location>
</feature>
<feature type="turn" evidence="23">
    <location>
        <begin position="72"/>
        <end position="74"/>
    </location>
</feature>
<feature type="helix" evidence="24">
    <location>
        <begin position="77"/>
        <end position="79"/>
    </location>
</feature>
<feature type="strand" evidence="23">
    <location>
        <begin position="84"/>
        <end position="90"/>
    </location>
</feature>
<feature type="strand" evidence="23">
    <location>
        <begin position="92"/>
        <end position="99"/>
    </location>
</feature>
<feature type="turn" evidence="23">
    <location>
        <begin position="100"/>
        <end position="102"/>
    </location>
</feature>
<feature type="strand" evidence="23">
    <location>
        <begin position="105"/>
        <end position="110"/>
    </location>
</feature>
<feature type="helix" evidence="23">
    <location>
        <begin position="111"/>
        <end position="113"/>
    </location>
</feature>
<feature type="strand" evidence="23">
    <location>
        <begin position="114"/>
        <end position="119"/>
    </location>
</feature>
<feature type="strand" evidence="23">
    <location>
        <begin position="126"/>
        <end position="133"/>
    </location>
</feature>
<feature type="turn" evidence="23">
    <location>
        <begin position="134"/>
        <end position="137"/>
    </location>
</feature>
<feature type="strand" evidence="23">
    <location>
        <begin position="138"/>
        <end position="149"/>
    </location>
</feature>
<feature type="helix" evidence="23">
    <location>
        <begin position="151"/>
        <end position="168"/>
    </location>
</feature>
<protein>
    <recommendedName>
        <fullName>Protein numb homolog</fullName>
        <shortName>h-Numb</shortName>
    </recommendedName>
    <alternativeName>
        <fullName>Protein S171</fullName>
    </alternativeName>
</protein>
<comment type="function">
    <text evidence="3 9">Regulates clathrin-mediated receptor endocytosis (PubMed:18657069). Plays a role in the process of neurogenesis (By similarity). Required throughout embryonic neurogenesis to maintain neural progenitor cells, also called radial glial cells (RGCs), by allowing their daughter cells to choose progenitor over neuronal cell fate (By similarity). Not required for the proliferation of neural progenitor cells before the onset of neurogenesis. Also involved postnatally in the subventricular zone (SVZ) neurogenesis by regulating SVZ neuroblasts survival and ependymal wall integrity (By similarity). May also mediate local repair of brain ventricular wall damage (By similarity).</text>
</comment>
<comment type="subunit">
    <text evidence="2 3 6 7 8 9">Interacts with SIAH1 (PubMed:11752454). Interacts with LNX (By similarity). Interacts with CDH1 (By similarity). Interacts with TFAP2A and TFAP2B (By similarity). Interacts with RALBP1 in a complex also containing EPN1 and TFAP2A during interphase and mitosis (PubMed:12775724). Interacts with AAK1 (PubMed:18657069). May interact with DUOXA1 (PubMed:14670962).</text>
</comment>
<comment type="interaction">
    <interactant intactId="EBI-915016">
        <id>P49757</id>
    </interactant>
    <interactant intactId="EBI-491549">
        <id>P35222</id>
        <label>CTNNB1</label>
    </interactant>
    <organismsDiffer>false</organismsDiffer>
    <experiments>2</experiments>
</comment>
<comment type="interaction">
    <interactant intactId="EBI-915016">
        <id>P49757</id>
    </interactant>
    <interactant intactId="EBI-297353">
        <id>P00533</id>
        <label>EGFR</label>
    </interactant>
    <organismsDiffer>false</organismsDiffer>
    <experiments>2</experiments>
</comment>
<comment type="interaction">
    <interactant intactId="EBI-915016">
        <id>P49757</id>
    </interactant>
    <interactant intactId="EBI-396684">
        <id>P42566</id>
        <label>EPS15</label>
    </interactant>
    <organismsDiffer>false</organismsDiffer>
    <experiments>4</experiments>
</comment>
<comment type="interaction">
    <interactant intactId="EBI-915016">
        <id>P49757</id>
    </interactant>
    <interactant intactId="EBI-389668">
        <id>Q00987</id>
        <label>MDM2</label>
    </interactant>
    <organismsDiffer>false</organismsDiffer>
    <experiments>7</experiments>
</comment>
<comment type="interaction">
    <interactant intactId="EBI-915016">
        <id>P49757</id>
    </interactant>
    <interactant intactId="EBI-1171195">
        <id>Q96D71</id>
        <label>REPS1</label>
    </interactant>
    <organismsDiffer>false</organismsDiffer>
    <experiments>3</experiments>
</comment>
<comment type="interaction">
    <interactant intactId="EBI-915016">
        <id>P49757</id>
    </interactant>
    <interactant intactId="EBI-366083">
        <id>P04637</id>
        <label>TP53</label>
    </interactant>
    <organismsDiffer>false</organismsDiffer>
    <experiments>5</experiments>
</comment>
<comment type="interaction">
    <interactant intactId="EBI-7199607">
        <id>P49757-1</id>
    </interactant>
    <interactant intactId="EBI-295351">
        <id>Q05513</id>
        <label>PRKCZ</label>
    </interactant>
    <organismsDiffer>false</organismsDiffer>
    <experiments>4</experiments>
</comment>
<comment type="interaction">
    <interactant intactId="EBI-10692196">
        <id>P49757-3</id>
    </interactant>
    <interactant intactId="EBI-491549">
        <id>P35222</id>
        <label>CTNNB1</label>
    </interactant>
    <organismsDiffer>false</organismsDiffer>
    <experiments>3</experiments>
</comment>
<comment type="interaction">
    <interactant intactId="EBI-25937715">
        <id>P49757-8</id>
    </interactant>
    <interactant intactId="EBI-77613">
        <id>P05067</id>
        <label>APP</label>
    </interactant>
    <organismsDiffer>false</organismsDiffer>
    <experiments>3</experiments>
</comment>
<comment type="subcellular location">
    <subcellularLocation>
        <location evidence="9">Cell membrane</location>
        <topology evidence="17">Peripheral membrane protein</topology>
        <orientation evidence="17">Cytoplasmic side</orientation>
    </subcellularLocation>
    <subcellularLocation>
        <location evidence="9">Endosome membrane</location>
        <topology evidence="17">Peripheral membrane protein</topology>
        <orientation evidence="17">Cytoplasmic side</orientation>
    </subcellularLocation>
    <text evidence="9">Localizes to perinuclear endosomes in an AAK1-dependent manner.</text>
</comment>
<comment type="alternative products">
    <event type="alternative splicing"/>
    <isoform>
        <id>P49757-1</id>
        <name>1</name>
        <name>p72</name>
        <sequence type="displayed"/>
    </isoform>
    <isoform>
        <id>P49757-2</id>
        <name>2</name>
        <name>p66</name>
        <sequence type="described" ref="VSP_004349"/>
    </isoform>
    <isoform>
        <id>P49757-3</id>
        <name>3</name>
        <name>p71</name>
        <sequence type="described" ref="VSP_004348"/>
    </isoform>
    <isoform>
        <id>P49757-4</id>
        <name>4</name>
        <name>p65</name>
        <sequence type="described" ref="VSP_004348 VSP_004349"/>
    </isoform>
    <isoform>
        <id>P49757-5</id>
        <name>5</name>
        <sequence type="described" ref="VSP_047756 VSP_004349"/>
    </isoform>
    <isoform>
        <id>P49757-6</id>
        <name>6</name>
        <sequence type="described" ref="VSP_004348 VSP_047756 VSP_004349"/>
    </isoform>
    <isoform>
        <id>P49757-7</id>
        <name>7</name>
        <sequence type="described" ref="VSP_047756 VSP_053763 VSP_004349"/>
    </isoform>
    <isoform>
        <id>P49757-8</id>
        <name>8</name>
        <sequence type="described" ref="VSP_004348 VSP_047756 VSP_053763 VSP_004349"/>
    </isoform>
    <isoform>
        <id>P49757-9</id>
        <name>9</name>
        <sequence type="described" ref="VSP_053745 VSP_004349"/>
    </isoform>
</comment>
<comment type="PTM">
    <text evidence="1">Phosphorylated on Ser-276 and Ser-295 by CaMK1.</text>
</comment>
<comment type="PTM">
    <text evidence="1">Isoform 1 and isoform 2 are ubiquitinated by LNX leading to their subsequent proteasomal degradation (By similarity). Ubiquitinated; mediated by SIAH1 and leading to its subsequent proteasomal degradation.</text>
</comment>
<comment type="sequence caution" evidence="16">
    <conflict type="miscellaneous discrepancy">
        <sequence resource="EMBL-CDS" id="AAH20788"/>
    </conflict>
    <text>Intron retention.</text>
</comment>
<comment type="online information" name="Atlas of Genetics and Cytogenetics in Oncology and Haematology">
    <link uri="https://atlasgeneticsoncology.org/gene/43702/NUMB"/>
</comment>
<name>NUMB_HUMAN</name>
<sequence>MNKLRQSFRRKKDVYVPEASRPHQWQTDEEGVRTGKCSFPVKYLGHVEVDESRGMHICEDAVKRLKAERKFFKGFFGKTGKKAVKAVLWVSADGLRVVDEKTKDLIVDQTIEKVSFCAPDRNFDRAFSYICRDGTTRRWICHCFMAVKDTGERLSHAVGCAFAACLERKQKREKECGVTATFDASRTTFTREGSFRVTTATEQAEREEIMKQMQDAKKAETDKIVVGSSVAPGNTAPSPSSPTSPTSDATTSLEMNNPHAIPRRHAPIEQLARQGSFRGFPALSQKMSPFKRQLSLRINELPSTMQRKTDFPIKNAVPEVEGEAESISSLCSQITNAFSTPEDPFSSAPMTKPVTVVAPQSPTFQANGTDSAFHVLAKPAHTALAPVAMPVRETNPWAHAPDAANKEIAATCSGTEWGQSSGAASPGLFQAGHRRTPSEADRWLEEVSKSVRAQQPQASAAPLQPVLQPPPPTAISQPASPFQGNAFLTSQPVPVGVVPALQPAFVPAQSYPVANGMPYPAPNVPVVGITPSQMVANVFGTAGHPQAAHPHQSPSLVRQQTFPHYEASSATTSPFFKPPAQHLNGSAAFNGVDDGRLASADRHTEVPTGTCPVDPFEAQWAALENKSKQRTNPSPTNPFSSDLQKTFEIEL</sequence>
<reference key="1">
    <citation type="journal article" date="1997" name="Genes Dev.">
        <title>Binding specificity and in vivo targets of the EH domain, a novel protein-protein interaction module.</title>
        <authorList>
            <person name="Salcini A.E."/>
            <person name="Confalonieri S."/>
            <person name="Doria M."/>
            <person name="Santolini E."/>
            <person name="Tassi E."/>
            <person name="Minenkova O."/>
            <person name="Cesareni G."/>
            <person name="Pelicci P.G."/>
            <person name="Di Fiore P.P."/>
        </authorList>
    </citation>
    <scope>NUCLEOTIDE SEQUENCE [MRNA] (ISOFORM 2)</scope>
</reference>
<reference key="2">
    <citation type="journal article" date="1999" name="Proc. Natl. Acad. Sci. U.S.A.">
        <title>Distinct human NUMB isoforms regulate differentiation vs. proliferation in the neuronal lineage.</title>
        <authorList>
            <person name="Verdi J.M."/>
            <person name="Bashirullah A."/>
            <person name="Goldhawk D.E."/>
            <person name="Kubu C.J."/>
            <person name="Jamali M."/>
            <person name="Meakin S.O."/>
            <person name="Lipshitz H.D."/>
        </authorList>
    </citation>
    <scope>NUCLEOTIDE SEQUENCE [MRNA] (ISOFORMS 1; 2; 3 AND 4)</scope>
    <source>
        <tissue>Neuron</tissue>
    </source>
</reference>
<reference key="3">
    <citation type="journal article" date="2011" name="Placenta">
        <title>Characterization and role of NUMB in the human extravillous trophopblast.</title>
        <authorList>
            <person name="Haider M."/>
            <person name="Qiu Q."/>
            <person name="Bani-Yaghoub M."/>
            <person name="Tsang B.K."/>
            <person name="Gruslin A."/>
        </authorList>
    </citation>
    <scope>NUCLEOTIDE SEQUENCE [MRNA] (ISOFORMS 5; 6; 7; 8 AND 9)</scope>
    <scope>ALTERNATIVE SPLICING</scope>
    <source>
        <tissue>Placenta</tissue>
    </source>
</reference>
<reference key="4">
    <citation type="submission" date="1998-11" db="EMBL/GenBank/DDBJ databases">
        <authorList>
            <person name="Ye Q."/>
            <person name="Jiang K."/>
            <person name="Han W."/>
            <person name="Moore M.A.S."/>
        </authorList>
    </citation>
    <scope>NUCLEOTIDE SEQUENCE [MRNA] (ISOFORM 2)</scope>
</reference>
<reference key="5">
    <citation type="journal article" date="2004" name="Nat. Genet.">
        <title>Complete sequencing and characterization of 21,243 full-length human cDNAs.</title>
        <authorList>
            <person name="Ota T."/>
            <person name="Suzuki Y."/>
            <person name="Nishikawa T."/>
            <person name="Otsuki T."/>
            <person name="Sugiyama T."/>
            <person name="Irie R."/>
            <person name="Wakamatsu A."/>
            <person name="Hayashi K."/>
            <person name="Sato H."/>
            <person name="Nagai K."/>
            <person name="Kimura K."/>
            <person name="Makita H."/>
            <person name="Sekine M."/>
            <person name="Obayashi M."/>
            <person name="Nishi T."/>
            <person name="Shibahara T."/>
            <person name="Tanaka T."/>
            <person name="Ishii S."/>
            <person name="Yamamoto J."/>
            <person name="Saito K."/>
            <person name="Kawai Y."/>
            <person name="Isono Y."/>
            <person name="Nakamura Y."/>
            <person name="Nagahari K."/>
            <person name="Murakami K."/>
            <person name="Yasuda T."/>
            <person name="Iwayanagi T."/>
            <person name="Wagatsuma M."/>
            <person name="Shiratori A."/>
            <person name="Sudo H."/>
            <person name="Hosoiri T."/>
            <person name="Kaku Y."/>
            <person name="Kodaira H."/>
            <person name="Kondo H."/>
            <person name="Sugawara M."/>
            <person name="Takahashi M."/>
            <person name="Kanda K."/>
            <person name="Yokoi T."/>
            <person name="Furuya T."/>
            <person name="Kikkawa E."/>
            <person name="Omura Y."/>
            <person name="Abe K."/>
            <person name="Kamihara K."/>
            <person name="Katsuta N."/>
            <person name="Sato K."/>
            <person name="Tanikawa M."/>
            <person name="Yamazaki M."/>
            <person name="Ninomiya K."/>
            <person name="Ishibashi T."/>
            <person name="Yamashita H."/>
            <person name="Murakawa K."/>
            <person name="Fujimori K."/>
            <person name="Tanai H."/>
            <person name="Kimata M."/>
            <person name="Watanabe M."/>
            <person name="Hiraoka S."/>
            <person name="Chiba Y."/>
            <person name="Ishida S."/>
            <person name="Ono Y."/>
            <person name="Takiguchi S."/>
            <person name="Watanabe S."/>
            <person name="Yosida M."/>
            <person name="Hotuta T."/>
            <person name="Kusano J."/>
            <person name="Kanehori K."/>
            <person name="Takahashi-Fujii A."/>
            <person name="Hara H."/>
            <person name="Tanase T.-O."/>
            <person name="Nomura Y."/>
            <person name="Togiya S."/>
            <person name="Komai F."/>
            <person name="Hara R."/>
            <person name="Takeuchi K."/>
            <person name="Arita M."/>
            <person name="Imose N."/>
            <person name="Musashino K."/>
            <person name="Yuuki H."/>
            <person name="Oshima A."/>
            <person name="Sasaki N."/>
            <person name="Aotsuka S."/>
            <person name="Yoshikawa Y."/>
            <person name="Matsunawa H."/>
            <person name="Ichihara T."/>
            <person name="Shiohata N."/>
            <person name="Sano S."/>
            <person name="Moriya S."/>
            <person name="Momiyama H."/>
            <person name="Satoh N."/>
            <person name="Takami S."/>
            <person name="Terashima Y."/>
            <person name="Suzuki O."/>
            <person name="Nakagawa S."/>
            <person name="Senoh A."/>
            <person name="Mizoguchi H."/>
            <person name="Goto Y."/>
            <person name="Shimizu F."/>
            <person name="Wakebe H."/>
            <person name="Hishigaki H."/>
            <person name="Watanabe T."/>
            <person name="Sugiyama A."/>
            <person name="Takemoto M."/>
            <person name="Kawakami B."/>
            <person name="Yamazaki M."/>
            <person name="Watanabe K."/>
            <person name="Kumagai A."/>
            <person name="Itakura S."/>
            <person name="Fukuzumi Y."/>
            <person name="Fujimori Y."/>
            <person name="Komiyama M."/>
            <person name="Tashiro H."/>
            <person name="Tanigami A."/>
            <person name="Fujiwara T."/>
            <person name="Ono T."/>
            <person name="Yamada K."/>
            <person name="Fujii Y."/>
            <person name="Ozaki K."/>
            <person name="Hirao M."/>
            <person name="Ohmori Y."/>
            <person name="Kawabata A."/>
            <person name="Hikiji T."/>
            <person name="Kobatake N."/>
            <person name="Inagaki H."/>
            <person name="Ikema Y."/>
            <person name="Okamoto S."/>
            <person name="Okitani R."/>
            <person name="Kawakami T."/>
            <person name="Noguchi S."/>
            <person name="Itoh T."/>
            <person name="Shigeta K."/>
            <person name="Senba T."/>
            <person name="Matsumura K."/>
            <person name="Nakajima Y."/>
            <person name="Mizuno T."/>
            <person name="Morinaga M."/>
            <person name="Sasaki M."/>
            <person name="Togashi T."/>
            <person name="Oyama M."/>
            <person name="Hata H."/>
            <person name="Watanabe M."/>
            <person name="Komatsu T."/>
            <person name="Mizushima-Sugano J."/>
            <person name="Satoh T."/>
            <person name="Shirai Y."/>
            <person name="Takahashi Y."/>
            <person name="Nakagawa K."/>
            <person name="Okumura K."/>
            <person name="Nagase T."/>
            <person name="Nomura N."/>
            <person name="Kikuchi H."/>
            <person name="Masuho Y."/>
            <person name="Yamashita R."/>
            <person name="Nakai K."/>
            <person name="Yada T."/>
            <person name="Nakamura Y."/>
            <person name="Ohara O."/>
            <person name="Isogai T."/>
            <person name="Sugano S."/>
        </authorList>
    </citation>
    <scope>NUCLEOTIDE SEQUENCE [LARGE SCALE MRNA] (ISOFORMS 2 AND 9)</scope>
    <source>
        <tissue>Brain</tissue>
        <tissue>Trachea</tissue>
    </source>
</reference>
<reference key="6">
    <citation type="journal article" date="2003" name="Nature">
        <title>The DNA sequence and analysis of human chromosome 14.</title>
        <authorList>
            <person name="Heilig R."/>
            <person name="Eckenberg R."/>
            <person name="Petit J.-L."/>
            <person name="Fonknechten N."/>
            <person name="Da Silva C."/>
            <person name="Cattolico L."/>
            <person name="Levy M."/>
            <person name="Barbe V."/>
            <person name="De Berardinis V."/>
            <person name="Ureta-Vidal A."/>
            <person name="Pelletier E."/>
            <person name="Vico V."/>
            <person name="Anthouard V."/>
            <person name="Rowen L."/>
            <person name="Madan A."/>
            <person name="Qin S."/>
            <person name="Sun H."/>
            <person name="Du H."/>
            <person name="Pepin K."/>
            <person name="Artiguenave F."/>
            <person name="Robert C."/>
            <person name="Cruaud C."/>
            <person name="Bruels T."/>
            <person name="Jaillon O."/>
            <person name="Friedlander L."/>
            <person name="Samson G."/>
            <person name="Brottier P."/>
            <person name="Cure S."/>
            <person name="Segurens B."/>
            <person name="Aniere F."/>
            <person name="Samain S."/>
            <person name="Crespeau H."/>
            <person name="Abbasi N."/>
            <person name="Aiach N."/>
            <person name="Boscus D."/>
            <person name="Dickhoff R."/>
            <person name="Dors M."/>
            <person name="Dubois I."/>
            <person name="Friedman C."/>
            <person name="Gouyvenoux M."/>
            <person name="James R."/>
            <person name="Madan A."/>
            <person name="Mairey-Estrada B."/>
            <person name="Mangenot S."/>
            <person name="Martins N."/>
            <person name="Menard M."/>
            <person name="Oztas S."/>
            <person name="Ratcliffe A."/>
            <person name="Shaffer T."/>
            <person name="Trask B."/>
            <person name="Vacherie B."/>
            <person name="Bellemere C."/>
            <person name="Belser C."/>
            <person name="Besnard-Gonnet M."/>
            <person name="Bartol-Mavel D."/>
            <person name="Boutard M."/>
            <person name="Briez-Silla S."/>
            <person name="Combette S."/>
            <person name="Dufosse-Laurent V."/>
            <person name="Ferron C."/>
            <person name="Lechaplais C."/>
            <person name="Louesse C."/>
            <person name="Muselet D."/>
            <person name="Magdelenat G."/>
            <person name="Pateau E."/>
            <person name="Petit E."/>
            <person name="Sirvain-Trukniewicz P."/>
            <person name="Trybou A."/>
            <person name="Vega-Czarny N."/>
            <person name="Bataille E."/>
            <person name="Bluet E."/>
            <person name="Bordelais I."/>
            <person name="Dubois M."/>
            <person name="Dumont C."/>
            <person name="Guerin T."/>
            <person name="Haffray S."/>
            <person name="Hammadi R."/>
            <person name="Muanga J."/>
            <person name="Pellouin V."/>
            <person name="Robert D."/>
            <person name="Wunderle E."/>
            <person name="Gauguet G."/>
            <person name="Roy A."/>
            <person name="Sainte-Marthe L."/>
            <person name="Verdier J."/>
            <person name="Verdier-Discala C."/>
            <person name="Hillier L.W."/>
            <person name="Fulton L."/>
            <person name="McPherson J."/>
            <person name="Matsuda F."/>
            <person name="Wilson R."/>
            <person name="Scarpelli C."/>
            <person name="Gyapay G."/>
            <person name="Wincker P."/>
            <person name="Saurin W."/>
            <person name="Quetier F."/>
            <person name="Waterston R."/>
            <person name="Hood L."/>
            <person name="Weissenbach J."/>
        </authorList>
    </citation>
    <scope>NUCLEOTIDE SEQUENCE [LARGE SCALE GENOMIC DNA]</scope>
</reference>
<reference key="7">
    <citation type="submission" date="2005-07" db="EMBL/GenBank/DDBJ databases">
        <authorList>
            <person name="Mural R.J."/>
            <person name="Istrail S."/>
            <person name="Sutton G.G."/>
            <person name="Florea L."/>
            <person name="Halpern A.L."/>
            <person name="Mobarry C.M."/>
            <person name="Lippert R."/>
            <person name="Walenz B."/>
            <person name="Shatkay H."/>
            <person name="Dew I."/>
            <person name="Miller J.R."/>
            <person name="Flanigan M.J."/>
            <person name="Edwards N.J."/>
            <person name="Bolanos R."/>
            <person name="Fasulo D."/>
            <person name="Halldorsson B.V."/>
            <person name="Hannenhalli S."/>
            <person name="Turner R."/>
            <person name="Yooseph S."/>
            <person name="Lu F."/>
            <person name="Nusskern D.R."/>
            <person name="Shue B.C."/>
            <person name="Zheng X.H."/>
            <person name="Zhong F."/>
            <person name="Delcher A.L."/>
            <person name="Huson D.H."/>
            <person name="Kravitz S.A."/>
            <person name="Mouchard L."/>
            <person name="Reinert K."/>
            <person name="Remington K.A."/>
            <person name="Clark A.G."/>
            <person name="Waterman M.S."/>
            <person name="Eichler E.E."/>
            <person name="Adams M.D."/>
            <person name="Hunkapiller M.W."/>
            <person name="Myers E.W."/>
            <person name="Venter J.C."/>
        </authorList>
    </citation>
    <scope>NUCLEOTIDE SEQUENCE [LARGE SCALE GENOMIC DNA]</scope>
</reference>
<reference key="8">
    <citation type="journal article" date="2004" name="Genome Res.">
        <title>The status, quality, and expansion of the NIH full-length cDNA project: the Mammalian Gene Collection (MGC).</title>
        <authorList>
            <consortium name="The MGC Project Team"/>
        </authorList>
    </citation>
    <scope>NUCLEOTIDE SEQUENCE [LARGE SCALE MRNA] (ISOFORM 4)</scope>
    <scope>NUCLEOTIDE SEQUENCE [LARGE SCALE MRNA] OF 1-256 (ISOFORMS 3/4)</scope>
    <source>
        <tissue>Liver</tissue>
        <tissue>Testis</tissue>
    </source>
</reference>
<reference key="9">
    <citation type="submission" date="2003-01" db="EMBL/GenBank/DDBJ databases">
        <title>Full-length cDNA libraries and normalization.</title>
        <authorList>
            <person name="Li W.B."/>
            <person name="Gruber C."/>
            <person name="Jessee J."/>
            <person name="Polayes D."/>
        </authorList>
    </citation>
    <scope>NUCLEOTIDE SEQUENCE [LARGE SCALE MRNA] OF 1-529 (ISOFORM 1)</scope>
    <source>
        <tissue>Cervix carcinoma</tissue>
    </source>
</reference>
<reference key="10">
    <citation type="submission" date="1998-11" db="EMBL/GenBank/DDBJ databases">
        <title>Complete sequence of the gene for presenilin 1.</title>
        <authorList>
            <person name="Rowen L."/>
            <person name="Madan A."/>
            <person name="Qin S."/>
            <person name="Abbasi N."/>
            <person name="Dors M."/>
            <person name="Ratcliffe A."/>
            <person name="Madan A."/>
            <person name="Dickhoff R."/>
            <person name="Shaffer T."/>
            <person name="James R."/>
            <person name="Lasky S."/>
            <person name="Hood L."/>
        </authorList>
    </citation>
    <scope>NUCLEOTIDE SEQUENCE [GENOMIC DNA] OF 79-651 (ISOFORMS 2/4)</scope>
    <source>
        <tissue>Fetal brain</tissue>
    </source>
</reference>
<reference key="11">
    <citation type="journal article" date="1995" name="Nature">
        <title>Cloning of a gene bearing missense mutations in early-onset familial Alzheimer's disease.</title>
        <authorList>
            <person name="Sherrington R."/>
            <person name="Rogaev E.I."/>
            <person name="Liang Y."/>
            <person name="Rogaeva E.A."/>
            <person name="Levesque G."/>
            <person name="Ikeda M."/>
            <person name="Chi H."/>
            <person name="Lin C."/>
            <person name="Li G."/>
            <person name="Holman K."/>
            <person name="Tsuda T."/>
            <person name="Mar L."/>
            <person name="Foncin J.-F."/>
            <person name="Bruni A.C."/>
            <person name="Montesi M.P."/>
            <person name="Sorbi S."/>
            <person name="Rainero I."/>
            <person name="Pinessi L."/>
            <person name="Nee L."/>
            <person name="Chumakov I."/>
            <person name="Pollen D."/>
            <person name="Brookes A."/>
            <person name="Sanseau P."/>
            <person name="Polinsky R.J."/>
            <person name="Wasco W."/>
            <person name="da Silva H.A.R."/>
            <person name="Haines J.L."/>
            <person name="Pericak-Vance M.A."/>
            <person name="Tanzi R.E."/>
            <person name="Roses A.D."/>
            <person name="Fraser P.E."/>
            <person name="Rommens J.M."/>
            <person name="St George-Hyslop P.H."/>
        </authorList>
    </citation>
    <scope>NUCLEOTIDE SEQUENCE [MRNA] OF 517-651</scope>
    <source>
        <tissue>Brain</tissue>
    </source>
</reference>
<reference key="12">
    <citation type="journal article" date="2001" name="Proc. Natl. Acad. Sci. U.S.A.">
        <title>Siah-1 binds and regulates the function of Numb.</title>
        <authorList>
            <person name="Susini L."/>
            <person name="Passer B.J."/>
            <person name="Amzallag-Elbaz N."/>
            <person name="Juven-Gershon T."/>
            <person name="Prieur S."/>
            <person name="Privat N."/>
            <person name="Tuynder M."/>
            <person name="Gendron M.-C."/>
            <person name="Israeel A."/>
            <person name="Amson R."/>
            <person name="Oren M."/>
            <person name="Telerman A."/>
        </authorList>
    </citation>
    <scope>INTERACTION WITH SIAH1</scope>
    <scope>DEGRADATION</scope>
</reference>
<reference key="13">
    <citation type="journal article" date="2003" name="J. Biol. Chem.">
        <title>RLIP, an effector of the Ral GTPases, is a platform for Cdk1 to phosphorylate epsin during the switch off of endocytosis in mitosis.</title>
        <authorList>
            <person name="Rosse C."/>
            <person name="L'Hoste S."/>
            <person name="Offner N."/>
            <person name="Picard A."/>
            <person name="Camonis J."/>
        </authorList>
    </citation>
    <scope>INTERACTION WITH RALBP1</scope>
</reference>
<reference key="14">
    <citation type="journal article" date="2004" name="J. Biol. Chem.">
        <title>A novel transmembrane protein recruits numb to the plasma membrane during asymmetric cell division.</title>
        <authorList>
            <person name="Qin H."/>
            <person name="Percival-Smith A."/>
            <person name="Li C."/>
            <person name="Jia C.Y.H."/>
            <person name="Gloor G."/>
            <person name="Li S.S.-C."/>
        </authorList>
    </citation>
    <scope>INTERACTION WITH DUOXA1</scope>
</reference>
<reference key="15">
    <citation type="journal article" date="2006" name="Cell">
        <title>Global, in vivo, and site-specific phosphorylation dynamics in signaling networks.</title>
        <authorList>
            <person name="Olsen J.V."/>
            <person name="Blagoev B."/>
            <person name="Gnad F."/>
            <person name="Macek B."/>
            <person name="Kumar C."/>
            <person name="Mortensen P."/>
            <person name="Mann M."/>
        </authorList>
    </citation>
    <scope>IDENTIFICATION BY MASS SPECTROMETRY [LARGE SCALE ANALYSIS]</scope>
    <source>
        <tissue>Cervix carcinoma</tissue>
    </source>
</reference>
<reference key="16">
    <citation type="journal article" date="2006" name="Nat. Biotechnol.">
        <title>A probability-based approach for high-throughput protein phosphorylation analysis and site localization.</title>
        <authorList>
            <person name="Beausoleil S.A."/>
            <person name="Villen J."/>
            <person name="Gerber S.A."/>
            <person name="Rush J."/>
            <person name="Gygi S.P."/>
        </authorList>
    </citation>
    <scope>PHOSPHORYLATION [LARGE SCALE ANALYSIS] AT SER-634</scope>
    <scope>IDENTIFICATION BY MASS SPECTROMETRY [LARGE SCALE ANALYSIS]</scope>
    <source>
        <tissue>Cervix carcinoma</tissue>
    </source>
</reference>
<reference key="17">
    <citation type="journal article" date="2008" name="Proc. Natl. Acad. Sci. U.S.A.">
        <title>A quantitative atlas of mitotic phosphorylation.</title>
        <authorList>
            <person name="Dephoure N."/>
            <person name="Zhou C."/>
            <person name="Villen J."/>
            <person name="Beausoleil S.A."/>
            <person name="Bakalarski C.E."/>
            <person name="Elledge S.J."/>
            <person name="Gygi S.P."/>
        </authorList>
    </citation>
    <scope>PHOSPHORYLATION [LARGE SCALE ANALYSIS] AT SER-244</scope>
    <scope>IDENTIFICATION BY MASS SPECTROMETRY [LARGE SCALE ANALYSIS]</scope>
    <source>
        <tissue>Cervix carcinoma</tissue>
    </source>
</reference>
<reference key="18">
    <citation type="journal article" date="2008" name="Traffic">
        <title>AAK1 regulates Numb function at an early step in clathrin-mediated endocytosis.</title>
        <authorList>
            <person name="Sorensen E.B."/>
            <person name="Conner S.D."/>
        </authorList>
    </citation>
    <scope>FUNCTION</scope>
    <scope>INTERACTION WITH AAK1</scope>
    <scope>SUBCELLULAR LOCATION</scope>
    <scope>PHOSPHORYLATION AT THR-102</scope>
    <scope>MUTAGENESIS OF THR-102</scope>
</reference>
<reference key="19">
    <citation type="journal article" date="2009" name="Sci. Signal.">
        <title>Quantitative phosphoproteomic analysis of T cell receptor signaling reveals system-wide modulation of protein-protein interactions.</title>
        <authorList>
            <person name="Mayya V."/>
            <person name="Lundgren D.H."/>
            <person name="Hwang S.-I."/>
            <person name="Rezaul K."/>
            <person name="Wu L."/>
            <person name="Eng J.K."/>
            <person name="Rodionov V."/>
            <person name="Han D.K."/>
        </authorList>
    </citation>
    <scope>IDENTIFICATION BY MASS SPECTROMETRY [LARGE SCALE ANALYSIS]</scope>
    <source>
        <tissue>Leukemic T-cell</tissue>
    </source>
</reference>
<reference key="20">
    <citation type="journal article" date="2010" name="Sci. Signal.">
        <title>Quantitative phosphoproteomics reveals widespread full phosphorylation site occupancy during mitosis.</title>
        <authorList>
            <person name="Olsen J.V."/>
            <person name="Vermeulen M."/>
            <person name="Santamaria A."/>
            <person name="Kumar C."/>
            <person name="Miller M.L."/>
            <person name="Jensen L.J."/>
            <person name="Gnad F."/>
            <person name="Cox J."/>
            <person name="Jensen T.S."/>
            <person name="Nigg E.A."/>
            <person name="Brunak S."/>
            <person name="Mann M."/>
        </authorList>
    </citation>
    <scope>IDENTIFICATION BY MASS SPECTROMETRY [LARGE SCALE ANALYSIS]</scope>
    <source>
        <tissue>Cervix carcinoma</tissue>
    </source>
</reference>
<reference key="21">
    <citation type="journal article" date="2011" name="BMC Syst. Biol.">
        <title>Initial characterization of the human central proteome.</title>
        <authorList>
            <person name="Burkard T.R."/>
            <person name="Planyavsky M."/>
            <person name="Kaupe I."/>
            <person name="Breitwieser F.P."/>
            <person name="Buerckstuemmer T."/>
            <person name="Bennett K.L."/>
            <person name="Superti-Furga G."/>
            <person name="Colinge J."/>
        </authorList>
    </citation>
    <scope>IDENTIFICATION BY MASS SPECTROMETRY [LARGE SCALE ANALYSIS]</scope>
</reference>
<reference key="22">
    <citation type="journal article" date="2011" name="Sci. Signal.">
        <title>System-wide temporal characterization of the proteome and phosphoproteome of human embryonic stem cell differentiation.</title>
        <authorList>
            <person name="Rigbolt K.T."/>
            <person name="Prokhorova T.A."/>
            <person name="Akimov V."/>
            <person name="Henningsen J."/>
            <person name="Johansen P.T."/>
            <person name="Kratchmarova I."/>
            <person name="Kassem M."/>
            <person name="Mann M."/>
            <person name="Olsen J.V."/>
            <person name="Blagoev B."/>
        </authorList>
    </citation>
    <scope>IDENTIFICATION BY MASS SPECTROMETRY [LARGE SCALE ANALYSIS]</scope>
</reference>
<reference key="23">
    <citation type="journal article" date="2013" name="J. Proteome Res.">
        <title>Toward a comprehensive characterization of a human cancer cell phosphoproteome.</title>
        <authorList>
            <person name="Zhou H."/>
            <person name="Di Palma S."/>
            <person name="Preisinger C."/>
            <person name="Peng M."/>
            <person name="Polat A.N."/>
            <person name="Heck A.J."/>
            <person name="Mohammed S."/>
        </authorList>
    </citation>
    <scope>PHOSPHORYLATION [LARGE SCALE ANALYSIS] AT SER-194; SER-425; THR-436; SER-438 AND SER-634</scope>
    <scope>IDENTIFICATION BY MASS SPECTROMETRY [LARGE SCALE ANALYSIS]</scope>
    <source>
        <tissue>Cervix carcinoma</tissue>
        <tissue>Erythroleukemia</tissue>
    </source>
</reference>
<reference key="24">
    <citation type="journal article" date="2014" name="J. Proteomics">
        <title>An enzyme assisted RP-RPLC approach for in-depth analysis of human liver phosphoproteome.</title>
        <authorList>
            <person name="Bian Y."/>
            <person name="Song C."/>
            <person name="Cheng K."/>
            <person name="Dong M."/>
            <person name="Wang F."/>
            <person name="Huang J."/>
            <person name="Sun D."/>
            <person name="Wang L."/>
            <person name="Ye M."/>
            <person name="Zou H."/>
        </authorList>
    </citation>
    <scope>PHOSPHORYLATION [LARGE SCALE ANALYSIS] AT SER-438</scope>
    <scope>IDENTIFICATION BY MASS SPECTROMETRY [LARGE SCALE ANALYSIS]</scope>
    <source>
        <tissue>Liver</tissue>
    </source>
</reference>
<organism>
    <name type="scientific">Homo sapiens</name>
    <name type="common">Human</name>
    <dbReference type="NCBI Taxonomy" id="9606"/>
    <lineage>
        <taxon>Eukaryota</taxon>
        <taxon>Metazoa</taxon>
        <taxon>Chordata</taxon>
        <taxon>Craniata</taxon>
        <taxon>Vertebrata</taxon>
        <taxon>Euteleostomi</taxon>
        <taxon>Mammalia</taxon>
        <taxon>Eutheria</taxon>
        <taxon>Euarchontoglires</taxon>
        <taxon>Primates</taxon>
        <taxon>Haplorrhini</taxon>
        <taxon>Catarrhini</taxon>
        <taxon>Hominidae</taxon>
        <taxon>Homo</taxon>
    </lineage>
</organism>
<gene>
    <name evidence="18" type="primary">NUMB</name>
    <name evidence="18" type="synonym">C14orf41</name>
</gene>
<evidence type="ECO:0000250" key="1"/>
<evidence type="ECO:0000250" key="2">
    <source>
        <dbReference type="UniProtKB" id="Q2LC84"/>
    </source>
</evidence>
<evidence type="ECO:0000250" key="3">
    <source>
        <dbReference type="UniProtKB" id="Q9QZS3"/>
    </source>
</evidence>
<evidence type="ECO:0000255" key="4">
    <source>
        <dbReference type="PROSITE-ProRule" id="PRU00148"/>
    </source>
</evidence>
<evidence type="ECO:0000256" key="5">
    <source>
        <dbReference type="SAM" id="MobiDB-lite"/>
    </source>
</evidence>
<evidence type="ECO:0000269" key="6">
    <source>
    </source>
</evidence>
<evidence type="ECO:0000269" key="7">
    <source>
    </source>
</evidence>
<evidence type="ECO:0000269" key="8">
    <source>
    </source>
</evidence>
<evidence type="ECO:0000269" key="9">
    <source>
    </source>
</evidence>
<evidence type="ECO:0000303" key="10">
    <source>
    </source>
</evidence>
<evidence type="ECO:0000303" key="11">
    <source>
    </source>
</evidence>
<evidence type="ECO:0000303" key="12">
    <source>
    </source>
</evidence>
<evidence type="ECO:0000303" key="13">
    <source>
    </source>
</evidence>
<evidence type="ECO:0000303" key="14">
    <source>
    </source>
</evidence>
<evidence type="ECO:0000303" key="15">
    <source ref="4"/>
</evidence>
<evidence type="ECO:0000305" key="16"/>
<evidence type="ECO:0000305" key="17">
    <source>
    </source>
</evidence>
<evidence type="ECO:0000312" key="18">
    <source>
        <dbReference type="HGNC" id="HGNC:8060"/>
    </source>
</evidence>
<evidence type="ECO:0007744" key="19">
    <source>
    </source>
</evidence>
<evidence type="ECO:0007744" key="20">
    <source>
    </source>
</evidence>
<evidence type="ECO:0007744" key="21">
    <source>
    </source>
</evidence>
<evidence type="ECO:0007744" key="22">
    <source>
    </source>
</evidence>
<evidence type="ECO:0007829" key="23">
    <source>
        <dbReference type="PDB" id="5NJJ"/>
    </source>
</evidence>
<evidence type="ECO:0007829" key="24">
    <source>
        <dbReference type="PDB" id="5NJK"/>
    </source>
</evidence>
<accession>P49757</accession>
<accession>B1P2N5</accession>
<accession>B1P2N6</accession>
<accession>B1P2N7</accession>
<accession>B1P2N8</accession>
<accession>B1P2N9</accession>
<accession>B4E2B1</accession>
<accession>Q6NUQ7</accession>
<accession>Q86SY1</accession>
<accession>Q8WW73</accession>
<accession>Q9UBG1</accession>
<accession>Q9UEQ4</accession>
<accession>Q9UKE8</accession>
<accession>Q9UKE9</accession>
<accession>Q9UKF0</accession>
<accession>Q9UQJ4</accession>
<dbReference type="EMBL" id="AF015040">
    <property type="protein sequence ID" value="AAD01548.1"/>
    <property type="molecule type" value="mRNA"/>
</dbReference>
<dbReference type="EMBL" id="AF171938">
    <property type="protein sequence ID" value="AAD54279.1"/>
    <property type="molecule type" value="mRNA"/>
</dbReference>
<dbReference type="EMBL" id="AF171939">
    <property type="protein sequence ID" value="AAD54280.1"/>
    <property type="molecule type" value="mRNA"/>
</dbReference>
<dbReference type="EMBL" id="AF171940">
    <property type="protein sequence ID" value="AAD54281.1"/>
    <property type="molecule type" value="mRNA"/>
</dbReference>
<dbReference type="EMBL" id="AF171941">
    <property type="protein sequence ID" value="AAD54282.1"/>
    <property type="molecule type" value="mRNA"/>
</dbReference>
<dbReference type="EMBL" id="EU265734">
    <property type="protein sequence ID" value="ABY89090.1"/>
    <property type="molecule type" value="mRNA"/>
</dbReference>
<dbReference type="EMBL" id="EU265735">
    <property type="protein sequence ID" value="ABY89091.1"/>
    <property type="molecule type" value="mRNA"/>
</dbReference>
<dbReference type="EMBL" id="EU265736">
    <property type="protein sequence ID" value="ABY89092.1"/>
    <property type="molecule type" value="mRNA"/>
</dbReference>
<dbReference type="EMBL" id="EU265737">
    <property type="protein sequence ID" value="ABY89093.1"/>
    <property type="molecule type" value="mRNA"/>
</dbReference>
<dbReference type="EMBL" id="EU265738">
    <property type="protein sequence ID" value="ABY89094.1"/>
    <property type="molecule type" value="mRNA"/>
</dbReference>
<dbReference type="EMBL" id="AF108092">
    <property type="protein sequence ID" value="AAD27959.1"/>
    <property type="molecule type" value="mRNA"/>
</dbReference>
<dbReference type="EMBL" id="AK294591">
    <property type="protein sequence ID" value="BAG57779.1"/>
    <property type="molecule type" value="mRNA"/>
</dbReference>
<dbReference type="EMBL" id="AK304193">
    <property type="protein sequence ID" value="BAG65073.1"/>
    <property type="molecule type" value="mRNA"/>
</dbReference>
<dbReference type="EMBL" id="AC004846">
    <property type="status" value="NOT_ANNOTATED_CDS"/>
    <property type="molecule type" value="Genomic_DNA"/>
</dbReference>
<dbReference type="EMBL" id="AC005280">
    <property type="status" value="NOT_ANNOTATED_CDS"/>
    <property type="molecule type" value="Genomic_DNA"/>
</dbReference>
<dbReference type="EMBL" id="AL391733">
    <property type="status" value="NOT_ANNOTATED_CDS"/>
    <property type="molecule type" value="Genomic_DNA"/>
</dbReference>
<dbReference type="EMBL" id="CH471061">
    <property type="protein sequence ID" value="EAW81106.1"/>
    <property type="molecule type" value="Genomic_DNA"/>
</dbReference>
<dbReference type="EMBL" id="BC020788">
    <property type="protein sequence ID" value="AAH20788.1"/>
    <property type="status" value="ALT_SEQ"/>
    <property type="molecule type" value="mRNA"/>
</dbReference>
<dbReference type="EMBL" id="BC068476">
    <property type="protein sequence ID" value="AAH68476.1"/>
    <property type="molecule type" value="mRNA"/>
</dbReference>
<dbReference type="EMBL" id="BX248073">
    <property type="protein sequence ID" value="CAD62362.1"/>
    <property type="molecule type" value="mRNA"/>
</dbReference>
<dbReference type="EMBL" id="AF109907">
    <property type="protein sequence ID" value="AAC97962.1"/>
    <property type="molecule type" value="Genomic_DNA"/>
</dbReference>
<dbReference type="EMBL" id="L40393">
    <property type="protein sequence ID" value="AAC42000.1"/>
    <property type="molecule type" value="mRNA"/>
</dbReference>
<dbReference type="CCDS" id="CCDS32115.1">
    <molecule id="P49757-2"/>
</dbReference>
<dbReference type="CCDS" id="CCDS32116.1">
    <molecule id="P49757-1"/>
</dbReference>
<dbReference type="CCDS" id="CCDS55927.1">
    <molecule id="P49757-4"/>
</dbReference>
<dbReference type="CCDS" id="CCDS9814.1">
    <molecule id="P49757-3"/>
</dbReference>
<dbReference type="RefSeq" id="NP_001005743.1">
    <molecule id="P49757-1"/>
    <property type="nucleotide sequence ID" value="NM_001005743.2"/>
</dbReference>
<dbReference type="RefSeq" id="NP_001005744.1">
    <molecule id="P49757-2"/>
    <property type="nucleotide sequence ID" value="NM_001005744.2"/>
</dbReference>
<dbReference type="RefSeq" id="NP_001005745.1">
    <molecule id="P49757-4"/>
    <property type="nucleotide sequence ID" value="NM_001005745.2"/>
</dbReference>
<dbReference type="RefSeq" id="NP_001307043.1">
    <molecule id="P49757-2"/>
    <property type="nucleotide sequence ID" value="NM_001320114.2"/>
</dbReference>
<dbReference type="RefSeq" id="NP_003735.3">
    <molecule id="P49757-3"/>
    <property type="nucleotide sequence ID" value="NM_003744.5"/>
</dbReference>
<dbReference type="PDB" id="5NJJ">
    <property type="method" value="X-ray"/>
    <property type="resolution" value="2.70 A"/>
    <property type="chains" value="A/B/C/D=20-175"/>
</dbReference>
<dbReference type="PDB" id="5NJK">
    <property type="method" value="X-ray"/>
    <property type="resolution" value="3.13 A"/>
    <property type="chains" value="A/B/C/D/E/F=20-175"/>
</dbReference>
<dbReference type="PDBsum" id="5NJJ"/>
<dbReference type="PDBsum" id="5NJK"/>
<dbReference type="SMR" id="P49757"/>
<dbReference type="BioGRID" id="114202">
    <property type="interactions" value="236"/>
</dbReference>
<dbReference type="CORUM" id="P49757"/>
<dbReference type="DIP" id="DIP-37981N"/>
<dbReference type="ELM" id="P49757"/>
<dbReference type="FunCoup" id="P49757">
    <property type="interactions" value="1796"/>
</dbReference>
<dbReference type="IntAct" id="P49757">
    <property type="interactions" value="103"/>
</dbReference>
<dbReference type="MINT" id="P49757"/>
<dbReference type="STRING" id="9606.ENSP00000451300"/>
<dbReference type="GlyGen" id="P49757">
    <property type="glycosylation" value="1 site, 1 O-linked glycan (1 site)"/>
</dbReference>
<dbReference type="iPTMnet" id="P49757"/>
<dbReference type="MetOSite" id="P49757"/>
<dbReference type="PhosphoSitePlus" id="P49757"/>
<dbReference type="SwissPalm" id="P49757"/>
<dbReference type="BioMuta" id="NUMB"/>
<dbReference type="DMDM" id="14195675"/>
<dbReference type="jPOST" id="P49757"/>
<dbReference type="MassIVE" id="P49757"/>
<dbReference type="PaxDb" id="9606-ENSP00000451300"/>
<dbReference type="PeptideAtlas" id="P49757"/>
<dbReference type="ProteomicsDB" id="3393"/>
<dbReference type="ProteomicsDB" id="3394"/>
<dbReference type="ProteomicsDB" id="3395"/>
<dbReference type="ProteomicsDB" id="3396"/>
<dbReference type="ProteomicsDB" id="56075">
    <molecule id="P49757-1"/>
</dbReference>
<dbReference type="ProteomicsDB" id="56076">
    <molecule id="P49757-2"/>
</dbReference>
<dbReference type="ProteomicsDB" id="56077">
    <molecule id="P49757-3"/>
</dbReference>
<dbReference type="ProteomicsDB" id="56078">
    <molecule id="P49757-4"/>
</dbReference>
<dbReference type="Pumba" id="P49757"/>
<dbReference type="Antibodypedia" id="131">
    <property type="antibodies" value="912 antibodies from 43 providers"/>
</dbReference>
<dbReference type="DNASU" id="8650"/>
<dbReference type="Ensembl" id="ENST00000355058.7">
    <molecule id="P49757-1"/>
    <property type="protein sequence ID" value="ENSP00000347169.3"/>
    <property type="gene ID" value="ENSG00000133961.22"/>
</dbReference>
<dbReference type="Ensembl" id="ENST00000356296.8">
    <molecule id="P49757-2"/>
    <property type="protein sequence ID" value="ENSP00000348644.4"/>
    <property type="gene ID" value="ENSG00000133961.22"/>
</dbReference>
<dbReference type="Ensembl" id="ENST00000359560.7">
    <molecule id="P49757-3"/>
    <property type="protein sequence ID" value="ENSP00000352563.3"/>
    <property type="gene ID" value="ENSG00000133961.22"/>
</dbReference>
<dbReference type="Ensembl" id="ENST00000535282.5">
    <molecule id="P49757-2"/>
    <property type="protein sequence ID" value="ENSP00000441258.2"/>
    <property type="gene ID" value="ENSG00000133961.22"/>
</dbReference>
<dbReference type="Ensembl" id="ENST00000544991.7">
    <molecule id="P49757-7"/>
    <property type="protein sequence ID" value="ENSP00000446001.3"/>
    <property type="gene ID" value="ENSG00000133961.22"/>
</dbReference>
<dbReference type="Ensembl" id="ENST00000554521.6">
    <molecule id="P49757-8"/>
    <property type="protein sequence ID" value="ENSP00000450817.2"/>
    <property type="gene ID" value="ENSG00000133961.22"/>
</dbReference>
<dbReference type="Ensembl" id="ENST00000554546.5">
    <molecule id="P49757-4"/>
    <property type="protein sequence ID" value="ENSP00000452416.1"/>
    <property type="gene ID" value="ENSG00000133961.22"/>
</dbReference>
<dbReference type="Ensembl" id="ENST00000555238.6">
    <molecule id="P49757-1"/>
    <property type="protein sequence ID" value="ENSP00000451300.1"/>
    <property type="gene ID" value="ENSG00000133961.22"/>
</dbReference>
<dbReference type="Ensembl" id="ENST00000555394.5">
    <molecule id="P49757-2"/>
    <property type="protein sequence ID" value="ENSP00000451625.1"/>
    <property type="gene ID" value="ENSG00000133961.22"/>
</dbReference>
<dbReference type="Ensembl" id="ENST00000555738.6">
    <molecule id="P49757-6"/>
    <property type="protein sequence ID" value="ENSP00000452069.2"/>
    <property type="gene ID" value="ENSG00000133961.22"/>
</dbReference>
<dbReference type="Ensembl" id="ENST00000557597.5">
    <molecule id="P49757-3"/>
    <property type="protein sequence ID" value="ENSP00000451117.1"/>
    <property type="gene ID" value="ENSG00000133961.22"/>
</dbReference>
<dbReference type="Ensembl" id="ENST00000559312.5">
    <molecule id="P49757-7"/>
    <property type="protein sequence ID" value="ENSP00000452888.1"/>
    <property type="gene ID" value="ENSG00000133961.22"/>
</dbReference>
<dbReference type="Ensembl" id="ENST00000560335.5">
    <molecule id="P49757-5"/>
    <property type="protein sequence ID" value="ENSP00000453209.1"/>
    <property type="gene ID" value="ENSG00000133961.22"/>
</dbReference>
<dbReference type="GeneID" id="8650"/>
<dbReference type="KEGG" id="hsa:8650"/>
<dbReference type="MANE-Select" id="ENST00000555238.6">
    <property type="protein sequence ID" value="ENSP00000451300.1"/>
    <property type="RefSeq nucleotide sequence ID" value="NM_001005743.2"/>
    <property type="RefSeq protein sequence ID" value="NP_001005743.1"/>
</dbReference>
<dbReference type="UCSC" id="uc001xny.2">
    <molecule id="P49757-1"/>
    <property type="organism name" value="human"/>
</dbReference>
<dbReference type="AGR" id="HGNC:8060"/>
<dbReference type="CTD" id="8650"/>
<dbReference type="DisGeNET" id="8650"/>
<dbReference type="GeneCards" id="NUMB"/>
<dbReference type="HGNC" id="HGNC:8060">
    <property type="gene designation" value="NUMB"/>
</dbReference>
<dbReference type="HPA" id="ENSG00000133961">
    <property type="expression patterns" value="Low tissue specificity"/>
</dbReference>
<dbReference type="MalaCards" id="NUMB"/>
<dbReference type="MIM" id="603728">
    <property type="type" value="gene"/>
</dbReference>
<dbReference type="neXtProt" id="NX_P49757"/>
<dbReference type="OpenTargets" id="ENSG00000133961"/>
<dbReference type="PharmGKB" id="PA31845"/>
<dbReference type="VEuPathDB" id="HostDB:ENSG00000133961"/>
<dbReference type="eggNOG" id="KOG3537">
    <property type="taxonomic scope" value="Eukaryota"/>
</dbReference>
<dbReference type="GeneTree" id="ENSGT00940000156005"/>
<dbReference type="HOGENOM" id="CLU_031797_1_1_1"/>
<dbReference type="InParanoid" id="P49757"/>
<dbReference type="OMA" id="GMSYPAP"/>
<dbReference type="OrthoDB" id="10070446at2759"/>
<dbReference type="PAN-GO" id="P49757">
    <property type="GO annotations" value="2 GO annotations based on evolutionary models"/>
</dbReference>
<dbReference type="PhylomeDB" id="P49757"/>
<dbReference type="TreeFam" id="TF314159"/>
<dbReference type="PathwayCommons" id="P49757"/>
<dbReference type="Reactome" id="R-HSA-2122948">
    <property type="pathway name" value="Activated NOTCH1 Transmits Signal to the Nucleus"/>
</dbReference>
<dbReference type="Reactome" id="R-HSA-437239">
    <property type="pathway name" value="Recycling pathway of L1"/>
</dbReference>
<dbReference type="Reactome" id="R-HSA-5610780">
    <property type="pathway name" value="Degradation of GLI1 by the proteasome"/>
</dbReference>
<dbReference type="Reactome" id="R-HSA-5632684">
    <property type="pathway name" value="Hedgehog 'on' state"/>
</dbReference>
<dbReference type="Reactome" id="R-HSA-9725554">
    <property type="pathway name" value="Differentiation of Keratinocytes in Interfollicular Epidermis in Mammalian Skin"/>
</dbReference>
<dbReference type="SignaLink" id="P49757"/>
<dbReference type="SIGNOR" id="P49757"/>
<dbReference type="BioGRID-ORCS" id="8650">
    <property type="hits" value="17 hits in 1155 CRISPR screens"/>
</dbReference>
<dbReference type="ChiTaRS" id="NUMB">
    <property type="organism name" value="human"/>
</dbReference>
<dbReference type="GeneWiki" id="NUMB_(gene)"/>
<dbReference type="GenomeRNAi" id="8650"/>
<dbReference type="Pharos" id="P49757">
    <property type="development level" value="Tbio"/>
</dbReference>
<dbReference type="PRO" id="PR:P49757"/>
<dbReference type="Proteomes" id="UP000005640">
    <property type="component" value="Chromosome 14"/>
</dbReference>
<dbReference type="RNAct" id="P49757">
    <property type="molecule type" value="protein"/>
</dbReference>
<dbReference type="Bgee" id="ENSG00000133961">
    <property type="expression patterns" value="Expressed in monocyte and 199 other cell types or tissues"/>
</dbReference>
<dbReference type="ExpressionAtlas" id="P49757">
    <property type="expression patterns" value="baseline and differential"/>
</dbReference>
<dbReference type="GO" id="GO:0045177">
    <property type="term" value="C:apical part of cell"/>
    <property type="evidence" value="ECO:0007669"/>
    <property type="project" value="Ensembl"/>
</dbReference>
<dbReference type="GO" id="GO:0016323">
    <property type="term" value="C:basolateral plasma membrane"/>
    <property type="evidence" value="ECO:0000318"/>
    <property type="project" value="GO_Central"/>
</dbReference>
<dbReference type="GO" id="GO:0005905">
    <property type="term" value="C:clathrin-coated pit"/>
    <property type="evidence" value="ECO:0007669"/>
    <property type="project" value="Ensembl"/>
</dbReference>
<dbReference type="GO" id="GO:0030136">
    <property type="term" value="C:clathrin-coated vesicle"/>
    <property type="evidence" value="ECO:0000314"/>
    <property type="project" value="UniProtKB"/>
</dbReference>
<dbReference type="GO" id="GO:0005737">
    <property type="term" value="C:cytoplasm"/>
    <property type="evidence" value="ECO:0000318"/>
    <property type="project" value="GO_Central"/>
</dbReference>
<dbReference type="GO" id="GO:0031410">
    <property type="term" value="C:cytoplasmic vesicle"/>
    <property type="evidence" value="ECO:0000318"/>
    <property type="project" value="GO_Central"/>
</dbReference>
<dbReference type="GO" id="GO:0005769">
    <property type="term" value="C:early endosome"/>
    <property type="evidence" value="ECO:0007669"/>
    <property type="project" value="Ensembl"/>
</dbReference>
<dbReference type="GO" id="GO:0010008">
    <property type="term" value="C:endosome membrane"/>
    <property type="evidence" value="ECO:0007669"/>
    <property type="project" value="UniProtKB-SubCell"/>
</dbReference>
<dbReference type="GO" id="GO:0005925">
    <property type="term" value="C:focal adhesion"/>
    <property type="evidence" value="ECO:0007005"/>
    <property type="project" value="UniProtKB"/>
</dbReference>
<dbReference type="GO" id="GO:0098978">
    <property type="term" value="C:glutamatergic synapse"/>
    <property type="evidence" value="ECO:0007669"/>
    <property type="project" value="Ensembl"/>
</dbReference>
<dbReference type="GO" id="GO:0005886">
    <property type="term" value="C:plasma membrane"/>
    <property type="evidence" value="ECO:0000304"/>
    <property type="project" value="Reactome"/>
</dbReference>
<dbReference type="GO" id="GO:0045294">
    <property type="term" value="F:alpha-catenin binding"/>
    <property type="evidence" value="ECO:0007669"/>
    <property type="project" value="Ensembl"/>
</dbReference>
<dbReference type="GO" id="GO:0008013">
    <property type="term" value="F:beta-catenin binding"/>
    <property type="evidence" value="ECO:0007669"/>
    <property type="project" value="Ensembl"/>
</dbReference>
<dbReference type="GO" id="GO:0045296">
    <property type="term" value="F:cadherin binding"/>
    <property type="evidence" value="ECO:0007005"/>
    <property type="project" value="BHF-UCL"/>
</dbReference>
<dbReference type="GO" id="GO:0034332">
    <property type="term" value="P:adherens junction organization"/>
    <property type="evidence" value="ECO:0007669"/>
    <property type="project" value="Ensembl"/>
</dbReference>
<dbReference type="GO" id="GO:0007409">
    <property type="term" value="P:axonogenesis"/>
    <property type="evidence" value="ECO:0007669"/>
    <property type="project" value="Ensembl"/>
</dbReference>
<dbReference type="GO" id="GO:0021670">
    <property type="term" value="P:lateral ventricle development"/>
    <property type="evidence" value="ECO:0000250"/>
    <property type="project" value="UniProtKB"/>
</dbReference>
<dbReference type="GO" id="GO:1903077">
    <property type="term" value="P:negative regulation of protein localization to plasma membrane"/>
    <property type="evidence" value="ECO:0000315"/>
    <property type="project" value="UniProtKB"/>
</dbReference>
<dbReference type="GO" id="GO:0021849">
    <property type="term" value="P:neuroblast division in subventricular zone"/>
    <property type="evidence" value="ECO:0000250"/>
    <property type="project" value="UniProtKB"/>
</dbReference>
<dbReference type="GO" id="GO:0030335">
    <property type="term" value="P:positive regulation of cell migration"/>
    <property type="evidence" value="ECO:0000315"/>
    <property type="project" value="UniProtKB"/>
</dbReference>
<dbReference type="GO" id="GO:0050769">
    <property type="term" value="P:positive regulation of neurogenesis"/>
    <property type="evidence" value="ECO:0000250"/>
    <property type="project" value="UniProtKB"/>
</dbReference>
<dbReference type="GO" id="GO:0099149">
    <property type="term" value="P:regulation of postsynaptic neurotransmitter receptor internalization"/>
    <property type="evidence" value="ECO:0007669"/>
    <property type="project" value="Ensembl"/>
</dbReference>
<dbReference type="CDD" id="cd01268">
    <property type="entry name" value="PTB_Numb"/>
    <property type="match status" value="1"/>
</dbReference>
<dbReference type="DisProt" id="DP01130"/>
<dbReference type="FunFam" id="2.30.29.30:FF:000031">
    <property type="entry name" value="protein numb isoform X1"/>
    <property type="match status" value="1"/>
</dbReference>
<dbReference type="Gene3D" id="2.30.29.30">
    <property type="entry name" value="Pleckstrin-homology domain (PH domain)/Phosphotyrosine-binding domain (PTB)"/>
    <property type="match status" value="1"/>
</dbReference>
<dbReference type="InterPro" id="IPR016698">
    <property type="entry name" value="Numb/numb-like"/>
</dbReference>
<dbReference type="InterPro" id="IPR010449">
    <property type="entry name" value="Numb_domain"/>
</dbReference>
<dbReference type="InterPro" id="IPR011993">
    <property type="entry name" value="PH-like_dom_sf"/>
</dbReference>
<dbReference type="InterPro" id="IPR006020">
    <property type="entry name" value="PTB/PI_dom"/>
</dbReference>
<dbReference type="PANTHER" id="PTHR47368">
    <property type="entry name" value="NUMB"/>
    <property type="match status" value="1"/>
</dbReference>
<dbReference type="PANTHER" id="PTHR47368:SF5">
    <property type="entry name" value="PROTEIN NUMB HOMOLOG"/>
    <property type="match status" value="1"/>
</dbReference>
<dbReference type="Pfam" id="PF06311">
    <property type="entry name" value="NumbF"/>
    <property type="match status" value="1"/>
</dbReference>
<dbReference type="Pfam" id="PF00640">
    <property type="entry name" value="PID"/>
    <property type="match status" value="1"/>
</dbReference>
<dbReference type="PIRSF" id="PIRSF017607">
    <property type="entry name" value="Numb/numb-like"/>
    <property type="match status" value="1"/>
</dbReference>
<dbReference type="SMART" id="SM00462">
    <property type="entry name" value="PTB"/>
    <property type="match status" value="1"/>
</dbReference>
<dbReference type="SUPFAM" id="SSF50729">
    <property type="entry name" value="PH domain-like"/>
    <property type="match status" value="1"/>
</dbReference>
<dbReference type="PROSITE" id="PS01179">
    <property type="entry name" value="PID"/>
    <property type="match status" value="1"/>
</dbReference>
<keyword id="KW-0002">3D-structure</keyword>
<keyword id="KW-0025">Alternative splicing</keyword>
<keyword id="KW-1003">Cell membrane</keyword>
<keyword id="KW-0217">Developmental protein</keyword>
<keyword id="KW-0967">Endosome</keyword>
<keyword id="KW-0472">Membrane</keyword>
<keyword id="KW-0524">Neurogenesis</keyword>
<keyword id="KW-0597">Phosphoprotein</keyword>
<keyword id="KW-1267">Proteomics identification</keyword>
<keyword id="KW-1185">Reference proteome</keyword>
<keyword id="KW-0832">Ubl conjugation</keyword>